<comment type="function">
    <text evidence="1">The RuvA-RuvB-RuvC complex processes Holliday junction (HJ) DNA during genetic recombination and DNA repair. Endonuclease that resolves HJ intermediates. Cleaves cruciform DNA by making single-stranded nicks across the HJ at symmetrical positions within the homologous arms, yielding a 5'-phosphate and a 3'-hydroxyl group; requires a central core of homology in the junction. The consensus cleavage sequence is 5'-(A/T)TT(C/G)-3'. Cleavage occurs on the 3'-side of the TT dinucleotide at the point of strand exchange. HJ branch migration catalyzed by RuvA-RuvB allows RuvC to scan DNA until it finds its consensus sequence, where it cleaves and resolves the cruciform DNA.</text>
</comment>
<comment type="catalytic activity">
    <reaction evidence="1">
        <text>Endonucleolytic cleavage at a junction such as a reciprocal single-stranded crossover between two homologous DNA duplexes (Holliday junction).</text>
        <dbReference type="EC" id="3.1.21.10"/>
    </reaction>
</comment>
<comment type="cofactor">
    <cofactor evidence="1">
        <name>Mg(2+)</name>
        <dbReference type="ChEBI" id="CHEBI:18420"/>
    </cofactor>
    <text evidence="1">Binds 2 Mg(2+) ion per subunit.</text>
</comment>
<comment type="subunit">
    <text evidence="1">Homodimer which binds Holliday junction (HJ) DNA. The HJ becomes 2-fold symmetrical on binding to RuvC with unstacked arms; it has a different conformation from HJ DNA in complex with RuvA. In the full resolvosome a probable DNA-RuvA(4)-RuvB(12)-RuvC(2) complex forms which resolves the HJ.</text>
</comment>
<comment type="subcellular location">
    <subcellularLocation>
        <location evidence="1">Cytoplasm</location>
    </subcellularLocation>
</comment>
<comment type="similarity">
    <text evidence="1">Belongs to the RuvC family.</text>
</comment>
<reference key="1">
    <citation type="submission" date="2009-03" db="EMBL/GenBank/DDBJ databases">
        <title>Comparison of the complete genome sequences of Rhodococcus erythropolis PR4 and Rhodococcus opacus B4.</title>
        <authorList>
            <person name="Takarada H."/>
            <person name="Sekine M."/>
            <person name="Hosoyama A."/>
            <person name="Yamada R."/>
            <person name="Fujisawa T."/>
            <person name="Omata S."/>
            <person name="Shimizu A."/>
            <person name="Tsukatani N."/>
            <person name="Tanikawa S."/>
            <person name="Fujita N."/>
            <person name="Harayama S."/>
        </authorList>
    </citation>
    <scope>NUCLEOTIDE SEQUENCE [LARGE SCALE GENOMIC DNA]</scope>
    <source>
        <strain>B4</strain>
    </source>
</reference>
<accession>C1B4C9</accession>
<protein>
    <recommendedName>
        <fullName evidence="1">Crossover junction endodeoxyribonuclease RuvC</fullName>
        <ecNumber evidence="1">3.1.21.10</ecNumber>
    </recommendedName>
    <alternativeName>
        <fullName evidence="1">Holliday junction nuclease RuvC</fullName>
    </alternativeName>
    <alternativeName>
        <fullName evidence="1">Holliday junction resolvase RuvC</fullName>
    </alternativeName>
</protein>
<gene>
    <name evidence="1" type="primary">ruvC</name>
    <name type="ordered locus">ROP_68710</name>
</gene>
<proteinExistence type="inferred from homology"/>
<name>RUVC_RHOOB</name>
<evidence type="ECO:0000255" key="1">
    <source>
        <dbReference type="HAMAP-Rule" id="MF_00034"/>
    </source>
</evidence>
<organism>
    <name type="scientific">Rhodococcus opacus (strain B4)</name>
    <dbReference type="NCBI Taxonomy" id="632772"/>
    <lineage>
        <taxon>Bacteria</taxon>
        <taxon>Bacillati</taxon>
        <taxon>Actinomycetota</taxon>
        <taxon>Actinomycetes</taxon>
        <taxon>Mycobacteriales</taxon>
        <taxon>Nocardiaceae</taxon>
        <taxon>Rhodococcus</taxon>
    </lineage>
</organism>
<keyword id="KW-0963">Cytoplasm</keyword>
<keyword id="KW-0227">DNA damage</keyword>
<keyword id="KW-0233">DNA recombination</keyword>
<keyword id="KW-0234">DNA repair</keyword>
<keyword id="KW-0238">DNA-binding</keyword>
<keyword id="KW-0255">Endonuclease</keyword>
<keyword id="KW-0378">Hydrolase</keyword>
<keyword id="KW-0460">Magnesium</keyword>
<keyword id="KW-0479">Metal-binding</keyword>
<keyword id="KW-0540">Nuclease</keyword>
<dbReference type="EC" id="3.1.21.10" evidence="1"/>
<dbReference type="EMBL" id="AP011115">
    <property type="protein sequence ID" value="BAH55118.1"/>
    <property type="molecule type" value="Genomic_DNA"/>
</dbReference>
<dbReference type="RefSeq" id="WP_015890548.1">
    <property type="nucleotide sequence ID" value="NC_012522.1"/>
</dbReference>
<dbReference type="SMR" id="C1B4C9"/>
<dbReference type="STRING" id="632772.ROP_68710"/>
<dbReference type="KEGG" id="rop:ROP_68710"/>
<dbReference type="PATRIC" id="fig|632772.20.peg.7161"/>
<dbReference type="HOGENOM" id="CLU_091257_0_2_11"/>
<dbReference type="OrthoDB" id="9805499at2"/>
<dbReference type="Proteomes" id="UP000002212">
    <property type="component" value="Chromosome"/>
</dbReference>
<dbReference type="GO" id="GO:0005737">
    <property type="term" value="C:cytoplasm"/>
    <property type="evidence" value="ECO:0007669"/>
    <property type="project" value="UniProtKB-SubCell"/>
</dbReference>
<dbReference type="GO" id="GO:0048476">
    <property type="term" value="C:Holliday junction resolvase complex"/>
    <property type="evidence" value="ECO:0007669"/>
    <property type="project" value="UniProtKB-UniRule"/>
</dbReference>
<dbReference type="GO" id="GO:0008821">
    <property type="term" value="F:crossover junction DNA endonuclease activity"/>
    <property type="evidence" value="ECO:0007669"/>
    <property type="project" value="UniProtKB-UniRule"/>
</dbReference>
<dbReference type="GO" id="GO:0003677">
    <property type="term" value="F:DNA binding"/>
    <property type="evidence" value="ECO:0007669"/>
    <property type="project" value="UniProtKB-KW"/>
</dbReference>
<dbReference type="GO" id="GO:0000287">
    <property type="term" value="F:magnesium ion binding"/>
    <property type="evidence" value="ECO:0007669"/>
    <property type="project" value="UniProtKB-UniRule"/>
</dbReference>
<dbReference type="GO" id="GO:0006310">
    <property type="term" value="P:DNA recombination"/>
    <property type="evidence" value="ECO:0007669"/>
    <property type="project" value="UniProtKB-UniRule"/>
</dbReference>
<dbReference type="GO" id="GO:0006281">
    <property type="term" value="P:DNA repair"/>
    <property type="evidence" value="ECO:0007669"/>
    <property type="project" value="UniProtKB-UniRule"/>
</dbReference>
<dbReference type="CDD" id="cd16962">
    <property type="entry name" value="RuvC"/>
    <property type="match status" value="1"/>
</dbReference>
<dbReference type="FunFam" id="3.30.420.10:FF:000002">
    <property type="entry name" value="Crossover junction endodeoxyribonuclease RuvC"/>
    <property type="match status" value="1"/>
</dbReference>
<dbReference type="Gene3D" id="3.30.420.10">
    <property type="entry name" value="Ribonuclease H-like superfamily/Ribonuclease H"/>
    <property type="match status" value="1"/>
</dbReference>
<dbReference type="HAMAP" id="MF_00034">
    <property type="entry name" value="RuvC"/>
    <property type="match status" value="1"/>
</dbReference>
<dbReference type="InterPro" id="IPR012337">
    <property type="entry name" value="RNaseH-like_sf"/>
</dbReference>
<dbReference type="InterPro" id="IPR036397">
    <property type="entry name" value="RNaseH_sf"/>
</dbReference>
<dbReference type="InterPro" id="IPR020563">
    <property type="entry name" value="X-over_junc_endoDNase_Mg_BS"/>
</dbReference>
<dbReference type="InterPro" id="IPR002176">
    <property type="entry name" value="X-over_junc_endoDNase_RuvC"/>
</dbReference>
<dbReference type="NCBIfam" id="NF000711">
    <property type="entry name" value="PRK00039.2-1"/>
    <property type="match status" value="1"/>
</dbReference>
<dbReference type="NCBIfam" id="TIGR00228">
    <property type="entry name" value="ruvC"/>
    <property type="match status" value="1"/>
</dbReference>
<dbReference type="PANTHER" id="PTHR30194">
    <property type="entry name" value="CROSSOVER JUNCTION ENDODEOXYRIBONUCLEASE RUVC"/>
    <property type="match status" value="1"/>
</dbReference>
<dbReference type="PANTHER" id="PTHR30194:SF3">
    <property type="entry name" value="CROSSOVER JUNCTION ENDODEOXYRIBONUCLEASE RUVC"/>
    <property type="match status" value="1"/>
</dbReference>
<dbReference type="Pfam" id="PF02075">
    <property type="entry name" value="RuvC"/>
    <property type="match status" value="1"/>
</dbReference>
<dbReference type="PRINTS" id="PR00696">
    <property type="entry name" value="RSOLVASERUVC"/>
</dbReference>
<dbReference type="SUPFAM" id="SSF53098">
    <property type="entry name" value="Ribonuclease H-like"/>
    <property type="match status" value="1"/>
</dbReference>
<dbReference type="PROSITE" id="PS01321">
    <property type="entry name" value="RUVC"/>
    <property type="match status" value="1"/>
</dbReference>
<feature type="chain" id="PRO_1000195270" description="Crossover junction endodeoxyribonuclease RuvC">
    <location>
        <begin position="1"/>
        <end position="189"/>
    </location>
</feature>
<feature type="active site" evidence="1">
    <location>
        <position position="7"/>
    </location>
</feature>
<feature type="active site" evidence="1">
    <location>
        <position position="68"/>
    </location>
</feature>
<feature type="active site" evidence="1">
    <location>
        <position position="141"/>
    </location>
</feature>
<feature type="binding site" evidence="1">
    <location>
        <position position="7"/>
    </location>
    <ligand>
        <name>Mg(2+)</name>
        <dbReference type="ChEBI" id="CHEBI:18420"/>
        <label>1</label>
    </ligand>
</feature>
<feature type="binding site" evidence="1">
    <location>
        <position position="68"/>
    </location>
    <ligand>
        <name>Mg(2+)</name>
        <dbReference type="ChEBI" id="CHEBI:18420"/>
        <label>2</label>
    </ligand>
</feature>
<feature type="binding site" evidence="1">
    <location>
        <position position="141"/>
    </location>
    <ligand>
        <name>Mg(2+)</name>
        <dbReference type="ChEBI" id="CHEBI:18420"/>
        <label>1</label>
    </ligand>
</feature>
<sequence length="189" mass="19955">MRVLGVDPGLTRCGFGVVDGGNGRTVTPVAVDVVRTPADLELSSRLLRISEAAESWIDLHRPEVVAIERVFAQHNVRTAMGTAQAGGVVALAAARRGIPVCFHTPSEVKAAVTGSGSADKAQVTAMVTRILKLAAAPRPADAADALALAICHCWRAPMIERMARAEAAAAEQKRRYQARLAEVKKAGTR</sequence>